<evidence type="ECO:0000255" key="1">
    <source>
        <dbReference type="PROSITE-ProRule" id="PRU01016"/>
    </source>
</evidence>
<evidence type="ECO:0000255" key="2">
    <source>
        <dbReference type="PROSITE-ProRule" id="PRU10018"/>
    </source>
</evidence>
<evidence type="ECO:0000303" key="3">
    <source>
    </source>
</evidence>
<evidence type="ECO:0000303" key="4">
    <source>
    </source>
</evidence>
<evidence type="ECO:0000303" key="5">
    <source>
    </source>
</evidence>
<evidence type="ECO:0000305" key="6">
    <source>
    </source>
</evidence>
<proteinExistence type="inferred from homology"/>
<feature type="chain" id="PRO_0000087889" description="Type II methylase M.HgiDII">
    <location>
        <begin position="1"/>
        <end position="354"/>
    </location>
</feature>
<feature type="domain" description="SAM-dependent MTase C5-type" evidence="1">
    <location>
        <begin position="3"/>
        <end position="344"/>
    </location>
</feature>
<feature type="active site" evidence="1 2">
    <location>
        <position position="79"/>
    </location>
</feature>
<name>MTD2_HERAU</name>
<accession>P25265</accession>
<reference key="1">
    <citation type="journal article" date="1991" name="Gene">
        <title>Cloning, sequence and characterization of m5C-methyltransferase-encoding gene, hgiDIIM (GTCGAC), from Herpetosiphon giganteus strain Hpa2.</title>
        <authorList>
            <person name="Duesterhoeft A."/>
            <person name="Kroeger M."/>
        </authorList>
    </citation>
    <scope>NUCLEOTIDE SEQUENCE [GENOMIC DNA]</scope>
    <scope>FUNCTION</scope>
    <source>
        <strain>HPA2</strain>
    </source>
</reference>
<reference key="2">
    <citation type="journal article" date="1995" name="Gene">
        <title>Organization and gene expression within restriction-modification systems of Herpetosiphon giganteus.</title>
        <authorList>
            <person name="Kroeger M."/>
            <person name="Blum E."/>
            <person name="Deppe E."/>
            <person name="Duesterhoeft A."/>
            <person name="Erdmann D."/>
            <person name="Kilz S."/>
            <person name="Meyer-Rogge S."/>
            <person name="Moestl D."/>
        </authorList>
    </citation>
    <scope>DISCUSSION OF SEQUENCE</scope>
</reference>
<reference key="3">
    <citation type="journal article" date="2003" name="Nucleic Acids Res.">
        <title>A nomenclature for restriction enzymes, DNA methyltransferases, homing endonucleases and their genes.</title>
        <authorList>
            <person name="Roberts R.J."/>
            <person name="Belfort M."/>
            <person name="Bestor T."/>
            <person name="Bhagwat A.S."/>
            <person name="Bickle T.A."/>
            <person name="Bitinaite J."/>
            <person name="Blumenthal R.M."/>
            <person name="Degtyarev S.K."/>
            <person name="Dryden D.T."/>
            <person name="Dybvig K."/>
            <person name="Firman K."/>
            <person name="Gromova E.S."/>
            <person name="Gumport R.I."/>
            <person name="Halford S.E."/>
            <person name="Hattman S."/>
            <person name="Heitman J."/>
            <person name="Hornby D.P."/>
            <person name="Janulaitis A."/>
            <person name="Jeltsch A."/>
            <person name="Josephsen J."/>
            <person name="Kiss A."/>
            <person name="Klaenhammer T.R."/>
            <person name="Kobayashi I."/>
            <person name="Kong H."/>
            <person name="Krueger D.H."/>
            <person name="Lacks S."/>
            <person name="Marinus M.G."/>
            <person name="Miyahara M."/>
            <person name="Morgan R.D."/>
            <person name="Murray N.E."/>
            <person name="Nagaraja V."/>
            <person name="Piekarowicz A."/>
            <person name="Pingoud A."/>
            <person name="Raleigh E."/>
            <person name="Rao D.N."/>
            <person name="Reich N."/>
            <person name="Repin V.E."/>
            <person name="Selker E.U."/>
            <person name="Shaw P.C."/>
            <person name="Stein D.C."/>
            <person name="Stoddard B.L."/>
            <person name="Szybalski W."/>
            <person name="Trautner T.A."/>
            <person name="Van Etten J.L."/>
            <person name="Vitor J.M."/>
            <person name="Wilson G.G."/>
            <person name="Xu S.Y."/>
        </authorList>
    </citation>
    <scope>NOMENCLATURE</scope>
</reference>
<keyword id="KW-0238">DNA-binding</keyword>
<keyword id="KW-0489">Methyltransferase</keyword>
<keyword id="KW-0680">Restriction system</keyword>
<keyword id="KW-0949">S-adenosyl-L-methionine</keyword>
<keyword id="KW-0808">Transferase</keyword>
<sequence length="354" mass="39853">MVGAVIDLFCGVGGLTHGLILEGFGVLAGIDNDPSCKYAYEQNNRTRFIEKSISEVDGRELNALYPNNQHKILVGCAPCQDFSQYTKKSRTGTKWQLLTEFSRLIREIEPDIISMENVPEVRTFNRGEVFNNFIQSLEQLGYHVSHSVVHCPDYGIPQQRDRLVLFAAKQGVIKIIPPTHTPENYRTVRDVIGSLATNYSGGHWEGDSMHAASRLEDINLRRIQHSVPGGTWADWPEELIAECHKKESGESYGSVYGRMEWDKVAPTITTQCNGYGNGRFGHPEQDRAISLREAALLQTFPRSYQFAPEGQLKFKTVSRQIGNAVPVALGRVIAKSIKRFLEGLHERQRVRIII</sequence>
<comment type="function">
    <text evidence="3 6">A methylase that recognizes the double-stranded sequence 5'-GTCGAC-3', methylates C-? on both strands and protects the DNA from cleavage by the HgiDII endonuclease.</text>
</comment>
<comment type="catalytic activity">
    <reaction evidence="2">
        <text>a 2'-deoxycytidine in DNA + S-adenosyl-L-methionine = a 5-methyl-2'-deoxycytidine in DNA + S-adenosyl-L-homocysteine + H(+)</text>
        <dbReference type="Rhea" id="RHEA:13681"/>
        <dbReference type="Rhea" id="RHEA-COMP:11369"/>
        <dbReference type="Rhea" id="RHEA-COMP:11370"/>
        <dbReference type="ChEBI" id="CHEBI:15378"/>
        <dbReference type="ChEBI" id="CHEBI:57856"/>
        <dbReference type="ChEBI" id="CHEBI:59789"/>
        <dbReference type="ChEBI" id="CHEBI:85452"/>
        <dbReference type="ChEBI" id="CHEBI:85454"/>
        <dbReference type="EC" id="2.1.1.37"/>
    </reaction>
</comment>
<comment type="similarity">
    <text evidence="1">Belongs to the class I-like SAM-binding methyltransferase superfamily. C5-methyltransferase family.</text>
</comment>
<organism>
    <name type="scientific">Herpetosiphon aurantiacus</name>
    <name type="common">Herpetosiphon giganteus</name>
    <dbReference type="NCBI Taxonomy" id="65"/>
    <lineage>
        <taxon>Bacteria</taxon>
        <taxon>Bacillati</taxon>
        <taxon>Chloroflexota</taxon>
        <taxon>Chloroflexia</taxon>
        <taxon>Herpetosiphonales</taxon>
        <taxon>Herpetosiphonaceae</taxon>
        <taxon>Herpetosiphon</taxon>
    </lineage>
</organism>
<dbReference type="EC" id="2.1.1.37"/>
<dbReference type="EMBL" id="X55141">
    <property type="protein sequence ID" value="CAA38941.1"/>
    <property type="molecule type" value="Genomic_DNA"/>
</dbReference>
<dbReference type="PIR" id="S21949">
    <property type="entry name" value="JT0594"/>
</dbReference>
<dbReference type="SMR" id="P25265"/>
<dbReference type="REBASE" id="101149">
    <property type="entry name" value="M.Rga602ORF33P"/>
</dbReference>
<dbReference type="REBASE" id="3418">
    <property type="entry name" value="M.HgiDII"/>
</dbReference>
<dbReference type="PRO" id="PR:P25265"/>
<dbReference type="GO" id="GO:0003886">
    <property type="term" value="F:DNA (cytosine-5-)-methyltransferase activity"/>
    <property type="evidence" value="ECO:0007669"/>
    <property type="project" value="UniProtKB-EC"/>
</dbReference>
<dbReference type="GO" id="GO:0003677">
    <property type="term" value="F:DNA binding"/>
    <property type="evidence" value="ECO:0007669"/>
    <property type="project" value="UniProtKB-KW"/>
</dbReference>
<dbReference type="GO" id="GO:0009307">
    <property type="term" value="P:DNA restriction-modification system"/>
    <property type="evidence" value="ECO:0007669"/>
    <property type="project" value="UniProtKB-KW"/>
</dbReference>
<dbReference type="GO" id="GO:0032259">
    <property type="term" value="P:methylation"/>
    <property type="evidence" value="ECO:0007669"/>
    <property type="project" value="UniProtKB-KW"/>
</dbReference>
<dbReference type="CDD" id="cd00315">
    <property type="entry name" value="Cyt_C5_DNA_methylase"/>
    <property type="match status" value="1"/>
</dbReference>
<dbReference type="Gene3D" id="3.90.120.10">
    <property type="entry name" value="DNA Methylase, subunit A, domain 2"/>
    <property type="match status" value="1"/>
</dbReference>
<dbReference type="Gene3D" id="3.40.50.150">
    <property type="entry name" value="Vaccinia Virus protein VP39"/>
    <property type="match status" value="1"/>
</dbReference>
<dbReference type="InterPro" id="IPR050390">
    <property type="entry name" value="C5-Methyltransferase"/>
</dbReference>
<dbReference type="InterPro" id="IPR018117">
    <property type="entry name" value="C5_DNA_meth_AS"/>
</dbReference>
<dbReference type="InterPro" id="IPR001525">
    <property type="entry name" value="C5_MeTfrase"/>
</dbReference>
<dbReference type="InterPro" id="IPR031303">
    <property type="entry name" value="C5_meth_CS"/>
</dbReference>
<dbReference type="InterPro" id="IPR029063">
    <property type="entry name" value="SAM-dependent_MTases_sf"/>
</dbReference>
<dbReference type="NCBIfam" id="TIGR00675">
    <property type="entry name" value="dcm"/>
    <property type="match status" value="1"/>
</dbReference>
<dbReference type="PANTHER" id="PTHR10629">
    <property type="entry name" value="CYTOSINE-SPECIFIC METHYLTRANSFERASE"/>
    <property type="match status" value="1"/>
</dbReference>
<dbReference type="PANTHER" id="PTHR10629:SF52">
    <property type="entry name" value="DNA (CYTOSINE-5)-METHYLTRANSFERASE 1"/>
    <property type="match status" value="1"/>
</dbReference>
<dbReference type="Pfam" id="PF00145">
    <property type="entry name" value="DNA_methylase"/>
    <property type="match status" value="1"/>
</dbReference>
<dbReference type="PRINTS" id="PR00105">
    <property type="entry name" value="C5METTRFRASE"/>
</dbReference>
<dbReference type="SUPFAM" id="SSF53335">
    <property type="entry name" value="S-adenosyl-L-methionine-dependent methyltransferases"/>
    <property type="match status" value="1"/>
</dbReference>
<dbReference type="PROSITE" id="PS00094">
    <property type="entry name" value="C5_MTASE_1"/>
    <property type="match status" value="1"/>
</dbReference>
<dbReference type="PROSITE" id="PS00095">
    <property type="entry name" value="C5_MTASE_2"/>
    <property type="match status" value="1"/>
</dbReference>
<dbReference type="PROSITE" id="PS51679">
    <property type="entry name" value="SAM_MT_C5"/>
    <property type="match status" value="1"/>
</dbReference>
<gene>
    <name evidence="4" type="primary">hgiDIIM</name>
</gene>
<protein>
    <recommendedName>
        <fullName evidence="3">Type II methylase M.HgiDII</fullName>
        <shortName evidence="5">M.HgiDII</shortName>
        <ecNumber>2.1.1.37</ecNumber>
    </recommendedName>
    <alternativeName>
        <fullName>Cytosine-specific methyltransferase HgiDII</fullName>
    </alternativeName>
    <alternativeName>
        <fullName>Modification methylase HgiDII</fullName>
    </alternativeName>
</protein>